<comment type="function">
    <text evidence="1">Regulator of peptidoglycan synthesis that is essential for the function of penicillin-binding protein 1A (PBP1a).</text>
</comment>
<comment type="subunit">
    <text evidence="1">Interacts with PBP1a.</text>
</comment>
<comment type="subcellular location">
    <subcellularLocation>
        <location evidence="1">Cell outer membrane</location>
        <topology evidence="1">Lipid-anchor</topology>
        <orientation evidence="1">Periplasmic side</orientation>
    </subcellularLocation>
</comment>
<comment type="similarity">
    <text evidence="1">Belongs to the LpoA family.</text>
</comment>
<protein>
    <recommendedName>
        <fullName evidence="1">Penicillin-binding protein activator LpoA</fullName>
        <shortName evidence="1">PBP activator LpoA</shortName>
    </recommendedName>
</protein>
<keyword id="KW-0998">Cell outer membrane</keyword>
<keyword id="KW-0133">Cell shape</keyword>
<keyword id="KW-0449">Lipoprotein</keyword>
<keyword id="KW-0472">Membrane</keyword>
<keyword id="KW-0564">Palmitate</keyword>
<keyword id="KW-0573">Peptidoglycan synthesis</keyword>
<keyword id="KW-1185">Reference proteome</keyword>
<keyword id="KW-0732">Signal</keyword>
<feature type="signal peptide" evidence="1">
    <location>
        <begin position="1"/>
        <end position="26"/>
    </location>
</feature>
<feature type="chain" id="PRO_0000405950" description="Penicillin-binding protein activator LpoA">
    <location>
        <begin position="27"/>
        <end position="603"/>
    </location>
</feature>
<feature type="lipid moiety-binding region" description="N-palmitoyl cysteine" evidence="1">
    <location>
        <position position="27"/>
    </location>
</feature>
<feature type="lipid moiety-binding region" description="S-diacylglycerol cysteine" evidence="1">
    <location>
        <position position="27"/>
    </location>
</feature>
<proteinExistence type="inferred from homology"/>
<reference key="1">
    <citation type="journal article" date="2005" name="Proc. Natl. Acad. Sci. U.S.A.">
        <title>Complete genome sequence of Vibrio fischeri: a symbiotic bacterium with pathogenic congeners.</title>
        <authorList>
            <person name="Ruby E.G."/>
            <person name="Urbanowski M."/>
            <person name="Campbell J."/>
            <person name="Dunn A."/>
            <person name="Faini M."/>
            <person name="Gunsalus R."/>
            <person name="Lostroh P."/>
            <person name="Lupp C."/>
            <person name="McCann J."/>
            <person name="Millikan D."/>
            <person name="Schaefer A."/>
            <person name="Stabb E."/>
            <person name="Stevens A."/>
            <person name="Visick K."/>
            <person name="Whistler C."/>
            <person name="Greenberg E.P."/>
        </authorList>
    </citation>
    <scope>NUCLEOTIDE SEQUENCE [LARGE SCALE GENOMIC DNA]</scope>
    <source>
        <strain>ATCC 700601 / ES114</strain>
    </source>
</reference>
<evidence type="ECO:0000255" key="1">
    <source>
        <dbReference type="HAMAP-Rule" id="MF_01890"/>
    </source>
</evidence>
<sequence>MANMTPRKNSVTRLIAPVALALTLAACSSSPKAPDRLDITQSPTETSNAYILKADQQQGALEADFLIMALKAAVQEQNFDLADKLFTRLATMQLSPAQTAEMQLAHAKMLKSQSQYEDALKTLNFEAWWKLENSQWVEYHKLRHELYLLSGDNLNSARELIELEPFTAEDQKAQLWTQVWTSVSSLNSTALEEVKLDETETNLHGWVQLATYLDTLKHSPMRLQETLNEWLLANPTHPAATYTPQVILDILALEIVRPENVALLLPLSGRFGPQGIRVRDGFINAMMEDKERDEFTKLKVIDTQATSMAEIMTTLEKEQIQFVVGPLVRSKIEEFQSLNSTEIAQLALNIPSEIDTDINSCYFTLSPEQEAEQAAVHLFKQGFKHPLYLAPQGTMGERLSQAFSDKWFQLTAKRPSISYFGSKAQLQQKVNSVFGIESSQARIYQMNALASMELEAQPRSRRDIDAVYMVAKSSELVLLKPFIEVAINPGIKPPKLYASSRSNSGRQTQLVEIKGIEFSDIPLLTNENHSFKAQYDELWPKSSNGETRLHALGMDAYQLVAELPQMKAVDNYRMEGKTGELSLNQECVIQRKMSWAVHGEETE</sequence>
<name>LPOA_ALIF1</name>
<dbReference type="EMBL" id="CP000020">
    <property type="protein sequence ID" value="AAW86706.1"/>
    <property type="molecule type" value="Genomic_DNA"/>
</dbReference>
<dbReference type="RefSeq" id="WP_011262640.1">
    <property type="nucleotide sequence ID" value="NC_006840.2"/>
</dbReference>
<dbReference type="RefSeq" id="YP_205594.1">
    <property type="nucleotide sequence ID" value="NC_006840.2"/>
</dbReference>
<dbReference type="SMR" id="Q5E2P0"/>
<dbReference type="STRING" id="312309.VF_2211"/>
<dbReference type="EnsemblBacteria" id="AAW86706">
    <property type="protein sequence ID" value="AAW86706"/>
    <property type="gene ID" value="VF_2211"/>
</dbReference>
<dbReference type="GeneID" id="54164928"/>
<dbReference type="KEGG" id="vfi:VF_2211"/>
<dbReference type="PATRIC" id="fig|312309.11.peg.2250"/>
<dbReference type="eggNOG" id="COG3107">
    <property type="taxonomic scope" value="Bacteria"/>
</dbReference>
<dbReference type="HOGENOM" id="CLU_026091_1_0_6"/>
<dbReference type="OrthoDB" id="6708821at2"/>
<dbReference type="Proteomes" id="UP000000537">
    <property type="component" value="Chromosome I"/>
</dbReference>
<dbReference type="GO" id="GO:0031241">
    <property type="term" value="C:periplasmic side of cell outer membrane"/>
    <property type="evidence" value="ECO:0007669"/>
    <property type="project" value="UniProtKB-UniRule"/>
</dbReference>
<dbReference type="GO" id="GO:0030234">
    <property type="term" value="F:enzyme regulator activity"/>
    <property type="evidence" value="ECO:0007669"/>
    <property type="project" value="UniProtKB-UniRule"/>
</dbReference>
<dbReference type="GO" id="GO:0009252">
    <property type="term" value="P:peptidoglycan biosynthetic process"/>
    <property type="evidence" value="ECO:0007669"/>
    <property type="project" value="UniProtKB-UniRule"/>
</dbReference>
<dbReference type="GO" id="GO:0008360">
    <property type="term" value="P:regulation of cell shape"/>
    <property type="evidence" value="ECO:0007669"/>
    <property type="project" value="UniProtKB-KW"/>
</dbReference>
<dbReference type="CDD" id="cd06339">
    <property type="entry name" value="PBP1_YraM_LppC_lipoprotein-like"/>
    <property type="match status" value="1"/>
</dbReference>
<dbReference type="Gene3D" id="1.25.40.650">
    <property type="match status" value="1"/>
</dbReference>
<dbReference type="Gene3D" id="3.40.50.2300">
    <property type="match status" value="2"/>
</dbReference>
<dbReference type="Gene3D" id="1.25.40.10">
    <property type="entry name" value="Tetratricopeptide repeat domain"/>
    <property type="match status" value="1"/>
</dbReference>
<dbReference type="HAMAP" id="MF_01890">
    <property type="entry name" value="LpoA"/>
    <property type="match status" value="1"/>
</dbReference>
<dbReference type="InterPro" id="IPR007443">
    <property type="entry name" value="LpoA"/>
</dbReference>
<dbReference type="InterPro" id="IPR028082">
    <property type="entry name" value="Peripla_BP_I"/>
</dbReference>
<dbReference type="InterPro" id="IPR011990">
    <property type="entry name" value="TPR-like_helical_dom_sf"/>
</dbReference>
<dbReference type="PANTHER" id="PTHR38038">
    <property type="entry name" value="PENICILLIN-BINDING PROTEIN ACTIVATOR LPOA"/>
    <property type="match status" value="1"/>
</dbReference>
<dbReference type="PANTHER" id="PTHR38038:SF1">
    <property type="entry name" value="PENICILLIN-BINDING PROTEIN ACTIVATOR LPOA"/>
    <property type="match status" value="1"/>
</dbReference>
<dbReference type="Pfam" id="PF04348">
    <property type="entry name" value="LppC"/>
    <property type="match status" value="1"/>
</dbReference>
<dbReference type="SUPFAM" id="SSF53822">
    <property type="entry name" value="Periplasmic binding protein-like I"/>
    <property type="match status" value="1"/>
</dbReference>
<dbReference type="PROSITE" id="PS51257">
    <property type="entry name" value="PROKAR_LIPOPROTEIN"/>
    <property type="match status" value="1"/>
</dbReference>
<gene>
    <name evidence="1" type="primary">lpoA</name>
    <name type="ordered locus">VF_2211</name>
</gene>
<accession>Q5E2P0</accession>
<organism>
    <name type="scientific">Aliivibrio fischeri (strain ATCC 700601 / ES114)</name>
    <name type="common">Vibrio fischeri</name>
    <dbReference type="NCBI Taxonomy" id="312309"/>
    <lineage>
        <taxon>Bacteria</taxon>
        <taxon>Pseudomonadati</taxon>
        <taxon>Pseudomonadota</taxon>
        <taxon>Gammaproteobacteria</taxon>
        <taxon>Vibrionales</taxon>
        <taxon>Vibrionaceae</taxon>
        <taxon>Aliivibrio</taxon>
    </lineage>
</organism>